<dbReference type="EC" id="2.7.7.6" evidence="1"/>
<dbReference type="EMBL" id="CP000961">
    <property type="protein sequence ID" value="ACA88946.1"/>
    <property type="molecule type" value="Genomic_DNA"/>
</dbReference>
<dbReference type="RefSeq" id="WP_012327265.1">
    <property type="nucleotide sequence ID" value="NC_010506.1"/>
</dbReference>
<dbReference type="SMR" id="B1KMY9"/>
<dbReference type="STRING" id="392500.Swoo_4696"/>
<dbReference type="KEGG" id="swd:Swoo_4696"/>
<dbReference type="eggNOG" id="COG0086">
    <property type="taxonomic scope" value="Bacteria"/>
</dbReference>
<dbReference type="HOGENOM" id="CLU_000524_3_1_6"/>
<dbReference type="Proteomes" id="UP000002168">
    <property type="component" value="Chromosome"/>
</dbReference>
<dbReference type="GO" id="GO:0000428">
    <property type="term" value="C:DNA-directed RNA polymerase complex"/>
    <property type="evidence" value="ECO:0007669"/>
    <property type="project" value="UniProtKB-KW"/>
</dbReference>
<dbReference type="GO" id="GO:0003677">
    <property type="term" value="F:DNA binding"/>
    <property type="evidence" value="ECO:0007669"/>
    <property type="project" value="UniProtKB-UniRule"/>
</dbReference>
<dbReference type="GO" id="GO:0003899">
    <property type="term" value="F:DNA-directed RNA polymerase activity"/>
    <property type="evidence" value="ECO:0007669"/>
    <property type="project" value="UniProtKB-UniRule"/>
</dbReference>
<dbReference type="GO" id="GO:0000287">
    <property type="term" value="F:magnesium ion binding"/>
    <property type="evidence" value="ECO:0007669"/>
    <property type="project" value="UniProtKB-UniRule"/>
</dbReference>
<dbReference type="GO" id="GO:0008270">
    <property type="term" value="F:zinc ion binding"/>
    <property type="evidence" value="ECO:0007669"/>
    <property type="project" value="UniProtKB-UniRule"/>
</dbReference>
<dbReference type="GO" id="GO:0006351">
    <property type="term" value="P:DNA-templated transcription"/>
    <property type="evidence" value="ECO:0007669"/>
    <property type="project" value="UniProtKB-UniRule"/>
</dbReference>
<dbReference type="CDD" id="cd02655">
    <property type="entry name" value="RNAP_beta'_C"/>
    <property type="match status" value="1"/>
</dbReference>
<dbReference type="CDD" id="cd01609">
    <property type="entry name" value="RNAP_beta'_N"/>
    <property type="match status" value="1"/>
</dbReference>
<dbReference type="FunFam" id="1.10.132.30:FF:000003">
    <property type="entry name" value="DNA-directed RNA polymerase subunit beta"/>
    <property type="match status" value="1"/>
</dbReference>
<dbReference type="FunFam" id="1.10.150.390:FF:000002">
    <property type="entry name" value="DNA-directed RNA polymerase subunit beta"/>
    <property type="match status" value="1"/>
</dbReference>
<dbReference type="FunFam" id="1.10.40.90:FF:000001">
    <property type="entry name" value="DNA-directed RNA polymerase subunit beta"/>
    <property type="match status" value="1"/>
</dbReference>
<dbReference type="FunFam" id="4.10.860.120:FF:000001">
    <property type="entry name" value="DNA-directed RNA polymerase subunit beta"/>
    <property type="match status" value="1"/>
</dbReference>
<dbReference type="Gene3D" id="1.10.132.30">
    <property type="match status" value="1"/>
</dbReference>
<dbReference type="Gene3D" id="1.10.150.390">
    <property type="match status" value="1"/>
</dbReference>
<dbReference type="Gene3D" id="1.10.1790.20">
    <property type="match status" value="1"/>
</dbReference>
<dbReference type="Gene3D" id="1.10.40.90">
    <property type="match status" value="1"/>
</dbReference>
<dbReference type="Gene3D" id="2.40.40.20">
    <property type="match status" value="1"/>
</dbReference>
<dbReference type="Gene3D" id="2.40.50.100">
    <property type="match status" value="3"/>
</dbReference>
<dbReference type="Gene3D" id="4.10.860.120">
    <property type="entry name" value="RNA polymerase II, clamp domain"/>
    <property type="match status" value="1"/>
</dbReference>
<dbReference type="Gene3D" id="1.10.274.100">
    <property type="entry name" value="RNA polymerase Rpb1, domain 3"/>
    <property type="match status" value="1"/>
</dbReference>
<dbReference type="HAMAP" id="MF_01322">
    <property type="entry name" value="RNApol_bact_RpoC"/>
    <property type="match status" value="1"/>
</dbReference>
<dbReference type="InterPro" id="IPR045867">
    <property type="entry name" value="DNA-dir_RpoC_beta_prime"/>
</dbReference>
<dbReference type="InterPro" id="IPR012754">
    <property type="entry name" value="DNA-dir_RpoC_beta_prime_bact"/>
</dbReference>
<dbReference type="InterPro" id="IPR000722">
    <property type="entry name" value="RNA_pol_asu"/>
</dbReference>
<dbReference type="InterPro" id="IPR006592">
    <property type="entry name" value="RNA_pol_N"/>
</dbReference>
<dbReference type="InterPro" id="IPR007080">
    <property type="entry name" value="RNA_pol_Rpb1_1"/>
</dbReference>
<dbReference type="InterPro" id="IPR007066">
    <property type="entry name" value="RNA_pol_Rpb1_3"/>
</dbReference>
<dbReference type="InterPro" id="IPR042102">
    <property type="entry name" value="RNA_pol_Rpb1_3_sf"/>
</dbReference>
<dbReference type="InterPro" id="IPR007083">
    <property type="entry name" value="RNA_pol_Rpb1_4"/>
</dbReference>
<dbReference type="InterPro" id="IPR007081">
    <property type="entry name" value="RNA_pol_Rpb1_5"/>
</dbReference>
<dbReference type="InterPro" id="IPR044893">
    <property type="entry name" value="RNA_pol_Rpb1_clamp_domain"/>
</dbReference>
<dbReference type="InterPro" id="IPR038120">
    <property type="entry name" value="Rpb1_funnel_sf"/>
</dbReference>
<dbReference type="NCBIfam" id="TIGR02386">
    <property type="entry name" value="rpoC_TIGR"/>
    <property type="match status" value="1"/>
</dbReference>
<dbReference type="PANTHER" id="PTHR19376">
    <property type="entry name" value="DNA-DIRECTED RNA POLYMERASE"/>
    <property type="match status" value="1"/>
</dbReference>
<dbReference type="PANTHER" id="PTHR19376:SF54">
    <property type="entry name" value="DNA-DIRECTED RNA POLYMERASE SUBUNIT BETA"/>
    <property type="match status" value="1"/>
</dbReference>
<dbReference type="Pfam" id="PF04997">
    <property type="entry name" value="RNA_pol_Rpb1_1"/>
    <property type="match status" value="1"/>
</dbReference>
<dbReference type="Pfam" id="PF00623">
    <property type="entry name" value="RNA_pol_Rpb1_2"/>
    <property type="match status" value="2"/>
</dbReference>
<dbReference type="Pfam" id="PF04983">
    <property type="entry name" value="RNA_pol_Rpb1_3"/>
    <property type="match status" value="1"/>
</dbReference>
<dbReference type="Pfam" id="PF05000">
    <property type="entry name" value="RNA_pol_Rpb1_4"/>
    <property type="match status" value="1"/>
</dbReference>
<dbReference type="Pfam" id="PF04998">
    <property type="entry name" value="RNA_pol_Rpb1_5"/>
    <property type="match status" value="1"/>
</dbReference>
<dbReference type="SMART" id="SM00663">
    <property type="entry name" value="RPOLA_N"/>
    <property type="match status" value="1"/>
</dbReference>
<dbReference type="SUPFAM" id="SSF64484">
    <property type="entry name" value="beta and beta-prime subunits of DNA dependent RNA-polymerase"/>
    <property type="match status" value="1"/>
</dbReference>
<evidence type="ECO:0000255" key="1">
    <source>
        <dbReference type="HAMAP-Rule" id="MF_01322"/>
    </source>
</evidence>
<comment type="function">
    <text evidence="1">DNA-dependent RNA polymerase catalyzes the transcription of DNA into RNA using the four ribonucleoside triphosphates as substrates.</text>
</comment>
<comment type="catalytic activity">
    <reaction evidence="1">
        <text>RNA(n) + a ribonucleoside 5'-triphosphate = RNA(n+1) + diphosphate</text>
        <dbReference type="Rhea" id="RHEA:21248"/>
        <dbReference type="Rhea" id="RHEA-COMP:14527"/>
        <dbReference type="Rhea" id="RHEA-COMP:17342"/>
        <dbReference type="ChEBI" id="CHEBI:33019"/>
        <dbReference type="ChEBI" id="CHEBI:61557"/>
        <dbReference type="ChEBI" id="CHEBI:140395"/>
        <dbReference type="EC" id="2.7.7.6"/>
    </reaction>
</comment>
<comment type="cofactor">
    <cofactor evidence="1">
        <name>Mg(2+)</name>
        <dbReference type="ChEBI" id="CHEBI:18420"/>
    </cofactor>
    <text evidence="1">Binds 1 Mg(2+) ion per subunit.</text>
</comment>
<comment type="cofactor">
    <cofactor evidence="1">
        <name>Zn(2+)</name>
        <dbReference type="ChEBI" id="CHEBI:29105"/>
    </cofactor>
    <text evidence="1">Binds 2 Zn(2+) ions per subunit.</text>
</comment>
<comment type="subunit">
    <text evidence="1">The RNAP catalytic core consists of 2 alpha, 1 beta, 1 beta' and 1 omega subunit. When a sigma factor is associated with the core the holoenzyme is formed, which can initiate transcription.</text>
</comment>
<comment type="similarity">
    <text evidence="1">Belongs to the RNA polymerase beta' chain family.</text>
</comment>
<sequence length="1405" mass="155289">MKDLLKFLKQQSKTEEFNGIKIGLASPDLIRSWSFGEVKKPETINYRTFKPEREGLFCARIFGPVKDYECLCGKYKRLKHRGVICEKCGVEVTQTKVRRERMGHIDLASPVAHIWFLKSLPSRIGLMLDMTLRDIERVLYFESFVVIEPGMTSLERGQMLTEENYLDALEEYGDEFEAKMGAEAVLELLRAIDLEKEIDMMREELPSINSETRRKKITKRLKLIEAFFQSGNKPEWMILKVLPVLPPDLRPLVPLDGGRFATSDLNDLYRRVINRNNRLKRLLDLAAPDIIVRNEKRMLQESVDALLDNGRRGRAITGSNKRPLKSLADMIKGKQGRFRQNLLGKRVDYSGRSVITVGPTLRLHQCGLPKKMALELFKPFIYGKLEGRGLATTIKAAKKMVEREVPEVWDVLDDVIREHPVMLNRAPTLHRLGIQAFEPVLIEGKAIQLHPLVCAAYNADFDGDQMAVHVPLTLEAQLEARSLMMSTNNILSPANGEPVITPSQDVVLGLYYTSRECVNGKGEGMAFESIDEVEKAYRTKVAAIHARIKVRVTETQIAENGERTESRRIVDTTVGRALLSRILPKGLSYDLVNQNMGKKQISKLLNTCYRQLGLKDTVIFADQLMYAGFHYATVSGASVGINDMVIPDEKYTLVADAEAEVLEIQEQFQSGLVTAGERYNKVIDIWASANEKVSKAMMANLSSETVINRDGEEEEQESFNSIYMMADSGARGSAAQIRQLAGMRGLMAKPDGSIIETPITANFREGLNVSQYFISTHGARKGLADTALKTANSGYLTRRLVDVAQDLVVIEEDCGTFEGLTMKPLIEGGDVVEPLRERVLGRVVAQDVLKPGTEEVLVPRNTLLDEAWCDIVEENSIDEMIVRSVISCDTDFGVCAACYGRDLARGHIINQGEAIGVVAAQSIGEPGTQLTMRTFHIGGAASRASAENNVQVKNLGTLKLHNAKYVTNSVGKLVIVSRSSELAIIDELGREKERYKVPYGTVLEKLEDDAVAAGEIIANWDPHTHPIVSEVAGSIKFVDMIEGVTMTRQTDELTGLSSIVVMEVGQRPSAGKEMRPAICLIGADGNDLMIPGTEVPAQYFLPGNAIVAQDDNAPINVGDALARIPQESSKTRDITGGLPRVADLFEARKPKEPAILAEHSGTISFGKETKGKRRLVITPADGGDHYEEMIPKWRNLNVFEGEKVERGEVIADGAEAAHDILRLRGIHKVANYIVNEVQDVYRLQGVKINDKHIEVIIRQMLRKCEITNAGDSEFLAGEQAEVSRVKIANRELEAQGKQPATFERELLGITKASLATESFISAASFQETTRVLTEAAVGGKSDKLRGLKENVIVGRLIPAGTGYSYHQKRNAETATGTDTEAAPVISASEAEQNLADLLNLAGSSD</sequence>
<keyword id="KW-0240">DNA-directed RNA polymerase</keyword>
<keyword id="KW-0460">Magnesium</keyword>
<keyword id="KW-0479">Metal-binding</keyword>
<keyword id="KW-0548">Nucleotidyltransferase</keyword>
<keyword id="KW-1185">Reference proteome</keyword>
<keyword id="KW-0804">Transcription</keyword>
<keyword id="KW-0808">Transferase</keyword>
<keyword id="KW-0862">Zinc</keyword>
<reference key="1">
    <citation type="submission" date="2008-02" db="EMBL/GenBank/DDBJ databases">
        <title>Complete sequence of Shewanella woodyi ATCC 51908.</title>
        <authorList>
            <consortium name="US DOE Joint Genome Institute"/>
            <person name="Copeland A."/>
            <person name="Lucas S."/>
            <person name="Lapidus A."/>
            <person name="Glavina del Rio T."/>
            <person name="Dalin E."/>
            <person name="Tice H."/>
            <person name="Bruce D."/>
            <person name="Goodwin L."/>
            <person name="Pitluck S."/>
            <person name="Sims D."/>
            <person name="Brettin T."/>
            <person name="Detter J.C."/>
            <person name="Han C."/>
            <person name="Kuske C.R."/>
            <person name="Schmutz J."/>
            <person name="Larimer F."/>
            <person name="Land M."/>
            <person name="Hauser L."/>
            <person name="Kyrpides N."/>
            <person name="Lykidis A."/>
            <person name="Zhao J.-S."/>
            <person name="Richardson P."/>
        </authorList>
    </citation>
    <scope>NUCLEOTIDE SEQUENCE [LARGE SCALE GENOMIC DNA]</scope>
    <source>
        <strain>ATCC 51908 / MS32</strain>
    </source>
</reference>
<proteinExistence type="inferred from homology"/>
<protein>
    <recommendedName>
        <fullName evidence="1">DNA-directed RNA polymerase subunit beta'</fullName>
        <shortName evidence="1">RNAP subunit beta'</shortName>
        <ecNumber evidence="1">2.7.7.6</ecNumber>
    </recommendedName>
    <alternativeName>
        <fullName evidence="1">RNA polymerase subunit beta'</fullName>
    </alternativeName>
    <alternativeName>
        <fullName evidence="1">Transcriptase subunit beta'</fullName>
    </alternativeName>
</protein>
<name>RPOC_SHEWM</name>
<organism>
    <name type="scientific">Shewanella woodyi (strain ATCC 51908 / MS32)</name>
    <dbReference type="NCBI Taxonomy" id="392500"/>
    <lineage>
        <taxon>Bacteria</taxon>
        <taxon>Pseudomonadati</taxon>
        <taxon>Pseudomonadota</taxon>
        <taxon>Gammaproteobacteria</taxon>
        <taxon>Alteromonadales</taxon>
        <taxon>Shewanellaceae</taxon>
        <taxon>Shewanella</taxon>
    </lineage>
</organism>
<gene>
    <name evidence="1" type="primary">rpoC</name>
    <name type="ordered locus">Swoo_4696</name>
</gene>
<feature type="chain" id="PRO_0000353433" description="DNA-directed RNA polymerase subunit beta'">
    <location>
        <begin position="1"/>
        <end position="1405"/>
    </location>
</feature>
<feature type="binding site" evidence="1">
    <location>
        <position position="70"/>
    </location>
    <ligand>
        <name>Zn(2+)</name>
        <dbReference type="ChEBI" id="CHEBI:29105"/>
        <label>1</label>
    </ligand>
</feature>
<feature type="binding site" evidence="1">
    <location>
        <position position="72"/>
    </location>
    <ligand>
        <name>Zn(2+)</name>
        <dbReference type="ChEBI" id="CHEBI:29105"/>
        <label>1</label>
    </ligand>
</feature>
<feature type="binding site" evidence="1">
    <location>
        <position position="85"/>
    </location>
    <ligand>
        <name>Zn(2+)</name>
        <dbReference type="ChEBI" id="CHEBI:29105"/>
        <label>1</label>
    </ligand>
</feature>
<feature type="binding site" evidence="1">
    <location>
        <position position="88"/>
    </location>
    <ligand>
        <name>Zn(2+)</name>
        <dbReference type="ChEBI" id="CHEBI:29105"/>
        <label>1</label>
    </ligand>
</feature>
<feature type="binding site" evidence="1">
    <location>
        <position position="460"/>
    </location>
    <ligand>
        <name>Mg(2+)</name>
        <dbReference type="ChEBI" id="CHEBI:18420"/>
    </ligand>
</feature>
<feature type="binding site" evidence="1">
    <location>
        <position position="462"/>
    </location>
    <ligand>
        <name>Mg(2+)</name>
        <dbReference type="ChEBI" id="CHEBI:18420"/>
    </ligand>
</feature>
<feature type="binding site" evidence="1">
    <location>
        <position position="464"/>
    </location>
    <ligand>
        <name>Mg(2+)</name>
        <dbReference type="ChEBI" id="CHEBI:18420"/>
    </ligand>
</feature>
<feature type="binding site" evidence="1">
    <location>
        <position position="814"/>
    </location>
    <ligand>
        <name>Zn(2+)</name>
        <dbReference type="ChEBI" id="CHEBI:29105"/>
        <label>2</label>
    </ligand>
</feature>
<feature type="binding site" evidence="1">
    <location>
        <position position="888"/>
    </location>
    <ligand>
        <name>Zn(2+)</name>
        <dbReference type="ChEBI" id="CHEBI:29105"/>
        <label>2</label>
    </ligand>
</feature>
<feature type="binding site" evidence="1">
    <location>
        <position position="895"/>
    </location>
    <ligand>
        <name>Zn(2+)</name>
        <dbReference type="ChEBI" id="CHEBI:29105"/>
        <label>2</label>
    </ligand>
</feature>
<feature type="binding site" evidence="1">
    <location>
        <position position="898"/>
    </location>
    <ligand>
        <name>Zn(2+)</name>
        <dbReference type="ChEBI" id="CHEBI:29105"/>
        <label>2</label>
    </ligand>
</feature>
<accession>B1KMY9</accession>